<evidence type="ECO:0000255" key="1">
    <source>
        <dbReference type="HAMAP-Rule" id="MF_02091"/>
    </source>
</evidence>
<gene>
    <name evidence="1" type="primary">yfcJ</name>
    <name type="ordered locus">Z3585</name>
    <name type="ordered locus">ECs3206</name>
</gene>
<reference key="1">
    <citation type="journal article" date="2001" name="Nature">
        <title>Genome sequence of enterohaemorrhagic Escherichia coli O157:H7.</title>
        <authorList>
            <person name="Perna N.T."/>
            <person name="Plunkett G. III"/>
            <person name="Burland V."/>
            <person name="Mau B."/>
            <person name="Glasner J.D."/>
            <person name="Rose D.J."/>
            <person name="Mayhew G.F."/>
            <person name="Evans P.S."/>
            <person name="Gregor J."/>
            <person name="Kirkpatrick H.A."/>
            <person name="Posfai G."/>
            <person name="Hackett J."/>
            <person name="Klink S."/>
            <person name="Boutin A."/>
            <person name="Shao Y."/>
            <person name="Miller L."/>
            <person name="Grotbeck E.J."/>
            <person name="Davis N.W."/>
            <person name="Lim A."/>
            <person name="Dimalanta E.T."/>
            <person name="Potamousis K."/>
            <person name="Apodaca J."/>
            <person name="Anantharaman T.S."/>
            <person name="Lin J."/>
            <person name="Yen G."/>
            <person name="Schwartz D.C."/>
            <person name="Welch R.A."/>
            <person name="Blattner F.R."/>
        </authorList>
    </citation>
    <scope>NUCLEOTIDE SEQUENCE [LARGE SCALE GENOMIC DNA]</scope>
    <source>
        <strain>O157:H7 / EDL933 / ATCC 700927 / EHEC</strain>
    </source>
</reference>
<reference key="2">
    <citation type="journal article" date="2001" name="DNA Res.">
        <title>Complete genome sequence of enterohemorrhagic Escherichia coli O157:H7 and genomic comparison with a laboratory strain K-12.</title>
        <authorList>
            <person name="Hayashi T."/>
            <person name="Makino K."/>
            <person name="Ohnishi M."/>
            <person name="Kurokawa K."/>
            <person name="Ishii K."/>
            <person name="Yokoyama K."/>
            <person name="Han C.-G."/>
            <person name="Ohtsubo E."/>
            <person name="Nakayama K."/>
            <person name="Murata T."/>
            <person name="Tanaka M."/>
            <person name="Tobe T."/>
            <person name="Iida T."/>
            <person name="Takami H."/>
            <person name="Honda T."/>
            <person name="Sasakawa C."/>
            <person name="Ogasawara N."/>
            <person name="Yasunaga T."/>
            <person name="Kuhara S."/>
            <person name="Shiba T."/>
            <person name="Hattori M."/>
            <person name="Shinagawa H."/>
        </authorList>
    </citation>
    <scope>NUCLEOTIDE SEQUENCE [LARGE SCALE GENOMIC DNA]</scope>
    <source>
        <strain>O157:H7 / Sakai / RIMD 0509952 / EHEC</strain>
    </source>
</reference>
<comment type="subcellular location">
    <subcellularLocation>
        <location evidence="1">Cell inner membrane</location>
        <topology evidence="1">Multi-pass membrane protein</topology>
    </subcellularLocation>
</comment>
<comment type="similarity">
    <text evidence="1">Belongs to the major facilitator superfamily. YfcJ family.</text>
</comment>
<name>YFCJ_ECO57</name>
<accession>Q8X564</accession>
<dbReference type="EMBL" id="AE005174">
    <property type="protein sequence ID" value="AAG57451.1"/>
    <property type="molecule type" value="Genomic_DNA"/>
</dbReference>
<dbReference type="EMBL" id="BA000007">
    <property type="protein sequence ID" value="BAB36629.1"/>
    <property type="molecule type" value="Genomic_DNA"/>
</dbReference>
<dbReference type="PIR" id="F91029">
    <property type="entry name" value="F91029"/>
</dbReference>
<dbReference type="PIR" id="G85873">
    <property type="entry name" value="G85873"/>
</dbReference>
<dbReference type="RefSeq" id="NP_311233.1">
    <property type="nucleotide sequence ID" value="NC_002695.1"/>
</dbReference>
<dbReference type="RefSeq" id="WP_000127753.1">
    <property type="nucleotide sequence ID" value="NZ_VOAI01000001.1"/>
</dbReference>
<dbReference type="SMR" id="Q8X564"/>
<dbReference type="STRING" id="155864.Z3585"/>
<dbReference type="GeneID" id="915695"/>
<dbReference type="KEGG" id="ece:Z3585"/>
<dbReference type="KEGG" id="ecs:ECs_3206"/>
<dbReference type="PATRIC" id="fig|386585.9.peg.3347"/>
<dbReference type="eggNOG" id="COG2814">
    <property type="taxonomic scope" value="Bacteria"/>
</dbReference>
<dbReference type="HOGENOM" id="CLU_001265_10_3_6"/>
<dbReference type="OMA" id="VLFGWMP"/>
<dbReference type="Proteomes" id="UP000000558">
    <property type="component" value="Chromosome"/>
</dbReference>
<dbReference type="Proteomes" id="UP000002519">
    <property type="component" value="Chromosome"/>
</dbReference>
<dbReference type="GO" id="GO:0005886">
    <property type="term" value="C:plasma membrane"/>
    <property type="evidence" value="ECO:0007669"/>
    <property type="project" value="UniProtKB-SubCell"/>
</dbReference>
<dbReference type="GO" id="GO:0022857">
    <property type="term" value="F:transmembrane transporter activity"/>
    <property type="evidence" value="ECO:0007669"/>
    <property type="project" value="UniProtKB-UniRule"/>
</dbReference>
<dbReference type="CDD" id="cd17489">
    <property type="entry name" value="MFS_YfcJ_like"/>
    <property type="match status" value="1"/>
</dbReference>
<dbReference type="FunFam" id="1.20.1250.20:FF:000269">
    <property type="entry name" value="Uncharacterized MFS-type transporter YfcJ"/>
    <property type="match status" value="1"/>
</dbReference>
<dbReference type="Gene3D" id="1.20.1250.20">
    <property type="entry name" value="MFS general substrate transporter like domains"/>
    <property type="match status" value="1"/>
</dbReference>
<dbReference type="HAMAP" id="MF_02091">
    <property type="entry name" value="MFS_YfcJ"/>
    <property type="match status" value="1"/>
</dbReference>
<dbReference type="InterPro" id="IPR011701">
    <property type="entry name" value="MFS"/>
</dbReference>
<dbReference type="InterPro" id="IPR020846">
    <property type="entry name" value="MFS_dom"/>
</dbReference>
<dbReference type="InterPro" id="IPR036259">
    <property type="entry name" value="MFS_trans_sf"/>
</dbReference>
<dbReference type="InterPro" id="IPR050171">
    <property type="entry name" value="MFS_Transporters"/>
</dbReference>
<dbReference type="InterPro" id="IPR037541">
    <property type="entry name" value="MFS_YfcJ"/>
</dbReference>
<dbReference type="NCBIfam" id="NF003477">
    <property type="entry name" value="PRK05122.1"/>
    <property type="match status" value="1"/>
</dbReference>
<dbReference type="NCBIfam" id="NF009048">
    <property type="entry name" value="PRK12382.1"/>
    <property type="match status" value="1"/>
</dbReference>
<dbReference type="PANTHER" id="PTHR23517:SF1">
    <property type="match status" value="1"/>
</dbReference>
<dbReference type="PANTHER" id="PTHR23517">
    <property type="entry name" value="RESISTANCE PROTEIN MDTM, PUTATIVE-RELATED-RELATED"/>
    <property type="match status" value="1"/>
</dbReference>
<dbReference type="Pfam" id="PF07690">
    <property type="entry name" value="MFS_1"/>
    <property type="match status" value="1"/>
</dbReference>
<dbReference type="SUPFAM" id="SSF103473">
    <property type="entry name" value="MFS general substrate transporter"/>
    <property type="match status" value="1"/>
</dbReference>
<dbReference type="PROSITE" id="PS50850">
    <property type="entry name" value="MFS"/>
    <property type="match status" value="1"/>
</dbReference>
<sequence>MTAVSQTETRSSANFSLFRIAFAVFLTYMTVGLPLPVIPLFVHHDLGYGNTMVGIAVGIQFLATVLTRGYAGRLADQYGAKRSALQGMLACGLAGGALLLAAILPVSAPFKFALLVIGRLILGFGESQLLTGALTWGLGIVGPKHSGKVMSWNGMAIYGALAVGAPLGLLIHSHYGFAALALTTMALPLLAWACNGTVRKVPALAGERPSLWSVVGLIWKPGLGLALQGVGFAVIGTFVSLYFASKGWAMAGFTLTAFGGAFVVMRVMFGWMPDRFGGVKVAIVSLLVETVGLLLLWQAPGAWVALAGAALTGAGCSLIFPALGVEVVKRVPSQVRGTALGGYAAFQDIALGVSGPLAGMLATTFGYSSVFLAGAISAVLGIIVTILSFRRG</sequence>
<feature type="chain" id="PRO_0000087802" description="Uncharacterized MFS-type transporter YfcJ">
    <location>
        <begin position="1"/>
        <end position="392"/>
    </location>
</feature>
<feature type="transmembrane region" description="Helical" evidence="1">
    <location>
        <begin position="22"/>
        <end position="42"/>
    </location>
</feature>
<feature type="transmembrane region" description="Helical" evidence="1">
    <location>
        <begin position="46"/>
        <end position="66"/>
    </location>
</feature>
<feature type="transmembrane region" description="Helical" evidence="1">
    <location>
        <begin position="97"/>
        <end position="117"/>
    </location>
</feature>
<feature type="transmembrane region" description="Helical" evidence="1">
    <location>
        <begin position="121"/>
        <end position="141"/>
    </location>
</feature>
<feature type="transmembrane region" description="Helical" evidence="1">
    <location>
        <begin position="151"/>
        <end position="171"/>
    </location>
</feature>
<feature type="transmembrane region" description="Helical" evidence="1">
    <location>
        <begin position="174"/>
        <end position="194"/>
    </location>
</feature>
<feature type="transmembrane region" description="Helical" evidence="1">
    <location>
        <begin position="223"/>
        <end position="243"/>
    </location>
</feature>
<feature type="transmembrane region" description="Helical" evidence="1">
    <location>
        <begin position="252"/>
        <end position="272"/>
    </location>
</feature>
<feature type="transmembrane region" description="Helical" evidence="1">
    <location>
        <begin position="276"/>
        <end position="298"/>
    </location>
</feature>
<feature type="transmembrane region" description="Helical" evidence="1">
    <location>
        <begin position="342"/>
        <end position="362"/>
    </location>
</feature>
<feature type="transmembrane region" description="Helical" evidence="1">
    <location>
        <begin position="369"/>
        <end position="389"/>
    </location>
</feature>
<proteinExistence type="inferred from homology"/>
<keyword id="KW-0997">Cell inner membrane</keyword>
<keyword id="KW-1003">Cell membrane</keyword>
<keyword id="KW-0472">Membrane</keyword>
<keyword id="KW-1185">Reference proteome</keyword>
<keyword id="KW-0812">Transmembrane</keyword>
<keyword id="KW-1133">Transmembrane helix</keyword>
<keyword id="KW-0813">Transport</keyword>
<protein>
    <recommendedName>
        <fullName evidence="1">Uncharacterized MFS-type transporter YfcJ</fullName>
    </recommendedName>
</protein>
<organism>
    <name type="scientific">Escherichia coli O157:H7</name>
    <dbReference type="NCBI Taxonomy" id="83334"/>
    <lineage>
        <taxon>Bacteria</taxon>
        <taxon>Pseudomonadati</taxon>
        <taxon>Pseudomonadota</taxon>
        <taxon>Gammaproteobacteria</taxon>
        <taxon>Enterobacterales</taxon>
        <taxon>Enterobacteriaceae</taxon>
        <taxon>Escherichia</taxon>
    </lineage>
</organism>